<keyword id="KW-0963">Cytoplasm</keyword>
<keyword id="KW-0238">DNA-binding</keyword>
<keyword id="KW-1017">Isopeptide bond</keyword>
<keyword id="KW-0446">Lipid-binding</keyword>
<keyword id="KW-0449">Lipoprotein</keyword>
<keyword id="KW-0479">Metal-binding</keyword>
<keyword id="KW-0539">Nucleus</keyword>
<keyword id="KW-0564">Palmitate</keyword>
<keyword id="KW-0597">Phosphoprotein</keyword>
<keyword id="KW-0675">Receptor</keyword>
<keyword id="KW-0754">Steroid-binding</keyword>
<keyword id="KW-0804">Transcription</keyword>
<keyword id="KW-0805">Transcription regulation</keyword>
<keyword id="KW-0832">Ubl conjugation</keyword>
<keyword id="KW-0862">Zinc</keyword>
<keyword id="KW-0863">Zinc-finger</keyword>
<dbReference type="EMBL" id="DQ485135">
    <property type="protein sequence ID" value="ABE73086.1"/>
    <property type="molecule type" value="Genomic_DNA"/>
</dbReference>
<dbReference type="GO" id="GO:0005737">
    <property type="term" value="C:cytoplasm"/>
    <property type="evidence" value="ECO:0007669"/>
    <property type="project" value="UniProtKB-SubCell"/>
</dbReference>
<dbReference type="GO" id="GO:0005654">
    <property type="term" value="C:nucleoplasm"/>
    <property type="evidence" value="ECO:0007669"/>
    <property type="project" value="UniProtKB-ARBA"/>
</dbReference>
<dbReference type="GO" id="GO:0003707">
    <property type="term" value="F:nuclear steroid receptor activity"/>
    <property type="evidence" value="ECO:0007669"/>
    <property type="project" value="InterPro"/>
</dbReference>
<dbReference type="GO" id="GO:0043565">
    <property type="term" value="F:sequence-specific DNA binding"/>
    <property type="evidence" value="ECO:0007669"/>
    <property type="project" value="InterPro"/>
</dbReference>
<dbReference type="GO" id="GO:0005496">
    <property type="term" value="F:steroid binding"/>
    <property type="evidence" value="ECO:0007669"/>
    <property type="project" value="UniProtKB-KW"/>
</dbReference>
<dbReference type="GO" id="GO:0008270">
    <property type="term" value="F:zinc ion binding"/>
    <property type="evidence" value="ECO:0007669"/>
    <property type="project" value="UniProtKB-KW"/>
</dbReference>
<dbReference type="CDD" id="cd07172">
    <property type="entry name" value="NR_DBD_GR_PR"/>
    <property type="match status" value="1"/>
</dbReference>
<dbReference type="CDD" id="cd07074">
    <property type="entry name" value="NR_LBD_PR"/>
    <property type="match status" value="1"/>
</dbReference>
<dbReference type="FunFam" id="1.10.565.10:FF:000004">
    <property type="entry name" value="Androgen receptor variant"/>
    <property type="match status" value="1"/>
</dbReference>
<dbReference type="FunFam" id="3.30.50.10:FF:000027">
    <property type="entry name" value="Progesterone receptor"/>
    <property type="match status" value="1"/>
</dbReference>
<dbReference type="Gene3D" id="3.30.50.10">
    <property type="entry name" value="Erythroid Transcription Factor GATA-1, subunit A"/>
    <property type="match status" value="1"/>
</dbReference>
<dbReference type="Gene3D" id="1.10.565.10">
    <property type="entry name" value="Retinoid X Receptor"/>
    <property type="match status" value="1"/>
</dbReference>
<dbReference type="InterPro" id="IPR035500">
    <property type="entry name" value="NHR-like_dom_sf"/>
</dbReference>
<dbReference type="InterPro" id="IPR000536">
    <property type="entry name" value="Nucl_hrmn_rcpt_lig-bd"/>
</dbReference>
<dbReference type="InterPro" id="IPR050200">
    <property type="entry name" value="Nuclear_hormone_rcpt_NR3"/>
</dbReference>
<dbReference type="InterPro" id="IPR001723">
    <property type="entry name" value="Nuclear_hrmn_rcpt"/>
</dbReference>
<dbReference type="InterPro" id="IPR000128">
    <property type="entry name" value="Progest_rcpt"/>
</dbReference>
<dbReference type="InterPro" id="IPR001628">
    <property type="entry name" value="Znf_hrmn_rcpt"/>
</dbReference>
<dbReference type="InterPro" id="IPR013088">
    <property type="entry name" value="Znf_NHR/GATA"/>
</dbReference>
<dbReference type="PANTHER" id="PTHR48092">
    <property type="entry name" value="KNIRPS-RELATED PROTEIN-RELATED"/>
    <property type="match status" value="1"/>
</dbReference>
<dbReference type="Pfam" id="PF00104">
    <property type="entry name" value="Hormone_recep"/>
    <property type="match status" value="1"/>
</dbReference>
<dbReference type="Pfam" id="PF02161">
    <property type="entry name" value="Prog_receptor"/>
    <property type="match status" value="1"/>
</dbReference>
<dbReference type="Pfam" id="PF00105">
    <property type="entry name" value="zf-C4"/>
    <property type="match status" value="1"/>
</dbReference>
<dbReference type="PRINTS" id="PR00544">
    <property type="entry name" value="PROGESTRONER"/>
</dbReference>
<dbReference type="PRINTS" id="PR00398">
    <property type="entry name" value="STRDHORMONER"/>
</dbReference>
<dbReference type="PRINTS" id="PR00047">
    <property type="entry name" value="STROIDFINGER"/>
</dbReference>
<dbReference type="SMART" id="SM00430">
    <property type="entry name" value="HOLI"/>
    <property type="match status" value="1"/>
</dbReference>
<dbReference type="SMART" id="SM00399">
    <property type="entry name" value="ZnF_C4"/>
    <property type="match status" value="1"/>
</dbReference>
<dbReference type="SUPFAM" id="SSF57716">
    <property type="entry name" value="Glucocorticoid receptor-like (DNA-binding domain)"/>
    <property type="match status" value="1"/>
</dbReference>
<dbReference type="SUPFAM" id="SSF48508">
    <property type="entry name" value="Nuclear receptor ligand-binding domain"/>
    <property type="match status" value="1"/>
</dbReference>
<dbReference type="PROSITE" id="PS51843">
    <property type="entry name" value="NR_LBD"/>
    <property type="match status" value="1"/>
</dbReference>
<dbReference type="PROSITE" id="PS00031">
    <property type="entry name" value="NUCLEAR_REC_DBD_1"/>
    <property type="match status" value="1"/>
</dbReference>
<dbReference type="PROSITE" id="PS51030">
    <property type="entry name" value="NUCLEAR_REC_DBD_2"/>
    <property type="match status" value="1"/>
</dbReference>
<feature type="chain" id="PRO_0000375850" description="Progesterone receptor">
    <location>
        <begin position="1"/>
        <end position="935"/>
    </location>
</feature>
<feature type="domain" description="NR LBD" evidence="6">
    <location>
        <begin position="681"/>
        <end position="915"/>
    </location>
</feature>
<feature type="DNA-binding region" description="Nuclear receptor" evidence="5">
    <location>
        <begin position="569"/>
        <end position="641"/>
    </location>
</feature>
<feature type="zinc finger region" description="NR C4-type" evidence="5">
    <location>
        <begin position="569"/>
        <end position="589"/>
    </location>
</feature>
<feature type="zinc finger region" description="NR C4-type" evidence="5">
    <location>
        <begin position="605"/>
        <end position="629"/>
    </location>
</feature>
<feature type="region of interest" description="Modulating, Pro-Rich">
    <location>
        <begin position="1"/>
        <end position="568"/>
    </location>
</feature>
<feature type="region of interest" description="AF3; mediates transcriptional activation" evidence="2">
    <location>
        <begin position="1"/>
        <end position="164"/>
    </location>
</feature>
<feature type="region of interest" description="Disordered" evidence="7">
    <location>
        <begin position="1"/>
        <end position="49"/>
    </location>
</feature>
<feature type="region of interest" description="Disordered" evidence="7">
    <location>
        <begin position="61"/>
        <end position="255"/>
    </location>
</feature>
<feature type="region of interest" description="Mediates transcriptional transrepression" evidence="2">
    <location>
        <begin position="165"/>
        <end position="305"/>
    </location>
</feature>
<feature type="region of interest" description="Disordered" evidence="7">
    <location>
        <begin position="331"/>
        <end position="365"/>
    </location>
</feature>
<feature type="region of interest" description="Disordered" evidence="7">
    <location>
        <begin position="415"/>
        <end position="452"/>
    </location>
</feature>
<feature type="region of interest" description="AF1; mediates transcriptional activation" evidence="2">
    <location>
        <begin position="456"/>
        <end position="548"/>
    </location>
</feature>
<feature type="region of interest" description="AF2; mediates transcriptional activation" evidence="2">
    <location>
        <begin position="689"/>
        <end position="935"/>
    </location>
</feature>
<feature type="short sequence motif" description="LXXL motif 1" evidence="2">
    <location>
        <begin position="55"/>
        <end position="59"/>
    </location>
</feature>
<feature type="short sequence motif" description="LXXL motif 2" evidence="2">
    <location>
        <begin position="115"/>
        <end position="119"/>
    </location>
</feature>
<feature type="short sequence motif" description="Nuclear localization signal" evidence="4">
    <location>
        <begin position="183"/>
        <end position="187"/>
    </location>
</feature>
<feature type="compositionally biased region" description="Low complexity" evidence="7">
    <location>
        <begin position="17"/>
        <end position="28"/>
    </location>
</feature>
<feature type="compositionally biased region" description="Polar residues" evidence="7">
    <location>
        <begin position="191"/>
        <end position="203"/>
    </location>
</feature>
<feature type="compositionally biased region" description="Acidic residues" evidence="7">
    <location>
        <begin position="220"/>
        <end position="231"/>
    </location>
</feature>
<feature type="compositionally biased region" description="Low complexity" evidence="7">
    <location>
        <begin position="232"/>
        <end position="246"/>
    </location>
</feature>
<feature type="compositionally biased region" description="Low complexity" evidence="7">
    <location>
        <begin position="335"/>
        <end position="356"/>
    </location>
</feature>
<feature type="compositionally biased region" description="Pro residues" evidence="7">
    <location>
        <begin position="418"/>
        <end position="433"/>
    </location>
</feature>
<feature type="compositionally biased region" description="Low complexity" evidence="7">
    <location>
        <begin position="434"/>
        <end position="452"/>
    </location>
</feature>
<feature type="modified residue" description="Phosphoserine" evidence="2">
    <location>
        <position position="20"/>
    </location>
</feature>
<feature type="modified residue" description="Phosphoserine" evidence="2">
    <location>
        <position position="81"/>
    </location>
</feature>
<feature type="modified residue" description="Phosphoserine" evidence="2">
    <location>
        <position position="130"/>
    </location>
</feature>
<feature type="modified residue" description="Phosphoserine" evidence="2">
    <location>
        <position position="162"/>
    </location>
</feature>
<feature type="modified residue" description="Phosphoserine" evidence="2">
    <location>
        <position position="190"/>
    </location>
</feature>
<feature type="modified residue" description="Phosphoserine" evidence="2">
    <location>
        <position position="213"/>
    </location>
</feature>
<feature type="modified residue" description="Phosphoserine; by MAPK1" evidence="2">
    <location>
        <position position="294"/>
    </location>
</feature>
<feature type="modified residue" description="Phosphoserine; by MAPK" evidence="2">
    <location>
        <position position="345"/>
    </location>
</feature>
<feature type="modified residue" description="Phosphoserine; by CDK2" evidence="2">
    <location>
        <position position="400"/>
    </location>
</feature>
<feature type="modified residue" description="Phosphoserine" evidence="2">
    <location>
        <position position="678"/>
    </location>
</feature>
<feature type="cross-link" description="Glycyl lysine isopeptide (Lys-Gly) (interchain with G-Cter in SUMO); alternate" evidence="1">
    <location>
        <position position="388"/>
    </location>
</feature>
<feature type="cross-link" description="Glycyl lysine isopeptide (Lys-Gly) (interchain with G-Cter in ubiquitin); alternate" evidence="2">
    <location>
        <position position="388"/>
    </location>
</feature>
<feature type="cross-link" description="Glycyl lysine isopeptide (Lys-Gly) (interchain with G-Cter in SUMO)" evidence="1">
    <location>
        <position position="533"/>
    </location>
</feature>
<organism>
    <name type="scientific">Ateles paniscus</name>
    <name type="common">Black spider monkey</name>
    <name type="synonym">Red-faced black spider monkey</name>
    <dbReference type="NCBI Taxonomy" id="9510"/>
    <lineage>
        <taxon>Eukaryota</taxon>
        <taxon>Metazoa</taxon>
        <taxon>Chordata</taxon>
        <taxon>Craniata</taxon>
        <taxon>Vertebrata</taxon>
        <taxon>Euteleostomi</taxon>
        <taxon>Mammalia</taxon>
        <taxon>Eutheria</taxon>
        <taxon>Euarchontoglires</taxon>
        <taxon>Primates</taxon>
        <taxon>Haplorrhini</taxon>
        <taxon>Platyrrhini</taxon>
        <taxon>Atelidae</taxon>
        <taxon>Atelinae</taxon>
        <taxon>Ateles</taxon>
    </lineage>
</organism>
<reference key="1">
    <citation type="journal article" date="2008" name="Mol. Phylogenet. Evol.">
        <title>The human progesterone receptor shows evidence of adaptive evolution associated with its ability to act as a transcription factor.</title>
        <authorList>
            <person name="Chen C."/>
            <person name="Opazo J.C."/>
            <person name="Erez O."/>
            <person name="Uddin M."/>
            <person name="Santolaya-Forgas J."/>
            <person name="Goodman M."/>
            <person name="Grossman L.I."/>
            <person name="Romero R."/>
            <person name="Wildman D.E."/>
        </authorList>
    </citation>
    <scope>NUCLEOTIDE SEQUENCE [GENOMIC DNA]</scope>
</reference>
<evidence type="ECO:0000250" key="1"/>
<evidence type="ECO:0000250" key="2">
    <source>
        <dbReference type="UniProtKB" id="P06401"/>
    </source>
</evidence>
<evidence type="ECO:0000250" key="3">
    <source>
        <dbReference type="UniProtKB" id="Q00175"/>
    </source>
</evidence>
<evidence type="ECO:0000255" key="4"/>
<evidence type="ECO:0000255" key="5">
    <source>
        <dbReference type="PROSITE-ProRule" id="PRU00407"/>
    </source>
</evidence>
<evidence type="ECO:0000255" key="6">
    <source>
        <dbReference type="PROSITE-ProRule" id="PRU01189"/>
    </source>
</evidence>
<evidence type="ECO:0000256" key="7">
    <source>
        <dbReference type="SAM" id="MobiDB-lite"/>
    </source>
</evidence>
<evidence type="ECO:0000305" key="8"/>
<gene>
    <name type="primary">PGR</name>
    <name type="synonym">NR3C3</name>
</gene>
<accession>A7XW25</accession>
<sequence length="935" mass="99487">MTELKAKGXRAPHVAGSPSSPKVXSPLPCRQAAXPFPGSQTSDTLPEVSALPISLDGLLFPRICQGQDPPDEKTQDQQSLSDVEGAYSRVEATRGAGGSSSRPPEKDSGLLDSVLDTLWAPSGPGQSQPSPPACEVTSSWCLFGPELPEDPPGTSATQRVLSRLMSRSGGKAGDSSGMAAAHKVLPRGLSPSRQLLLPTTGSPHWSGAPVKPSPQSAALEVEEEDGSESEDSAGPLLKGKPRALGGAAAGGGAAAVPPGAXAGGIALVPKEDSCFSAPRVALVEQDAPMAPGRSPLATTVTDFIHVPILPLSHALLAARTRQLLEDESYDGGAGAASAFAPPRSSPSASSTPVPGGDFPDCAYAPDAEPKDDAYPVYGDFQPPALKIKEEEEGAEASARSPRSYLVAGASPAAFPDFPLGPPPPLPPRAPPSRPGEAAVTAAPASASVSSASSSGSTLECILYKAEGAPPQQGPFAPPPCKAPGAGGCLLPRDSLPSTSASAAATAAGAAPALYPALGLNGLPQLGYQAAVLKEGLPQVYPPYLNYLRPDSEASQSPQYSFESLPQKICLICGDEASGCHYGVLTCGSCKVFFKRAMEGQHNYLCAGRNDCIVDKIRRKNCPACRLRKCCQAGMVLGGRKFKKFNKVRVMRALDAVALPQPVGIPNENQALSQRFTFSPNQDIQLIPPLINLLLSIEPDVIYAGHDHTKPDTSSSLLTSLNQLGERQLLSVVKWSKSLPGFRNLHIDDQITLIQYSWMSLMVFGLGWRSYKHVSGQMLYFAPDLILNEQRMKESSFYSLCLTMWQIPQEFVKLQVSQEEFLCMKVLLLLNTIPLEGLRSQTQFEEMRSSYIRELIKAIGLRQKGVVPSSQRFYQLTKLLDNLHDLVKQLHLYCLNTFIQSRALSVEFPEMMSEVIAAQLPKILAGMVKPLLFHKK</sequence>
<protein>
    <recommendedName>
        <fullName>Progesterone receptor</fullName>
        <shortName>PR</shortName>
    </recommendedName>
    <alternativeName>
        <fullName>Nuclear receptor subfamily 3 group C member 3</fullName>
    </alternativeName>
</protein>
<comment type="function">
    <text evidence="2">The steroid hormones and their receptors are involved in the regulation of eukaryotic gene expression and affect cellular proliferation and differentiation in target tissues. Transcriptional activator of several progesteron-dependent promoters in a variety of cell types. Involved in activation of SRC-dependent MAPK signaling on hormone stimulation.</text>
</comment>
<comment type="subunit">
    <text evidence="2 3">Interacts with SMARD1 and UNC45A. Interacts with CUEDC2; the interaction promotes ubiquitination, decreases sumoylation, and represses transcriptional activity. Interacts with PIAS3; the interaction promotes sumoylation of PR in a hormone-dependent manner, inhibits DNA-binding, and alters nuclear export. Interacts with SP1; the interaction requires ligand-induced phosphorylation on Ser-345 by ERK1/2-MAPK. Interacts with PRMT2. Interacts with NCOA2 and NCOA1. Interacts with KLF9. Interacts with GTF2B (By similarity).</text>
</comment>
<comment type="subcellular location">
    <subcellularLocation>
        <location>Nucleus</location>
    </subcellularLocation>
    <subcellularLocation>
        <location>Cytoplasm</location>
    </subcellularLocation>
    <text evidence="1">Nucleoplasmic shuttling is both hormone- and cell cycle-dependent. On hormone stimulation, retained in the cytoplasm in the G(1) and G(2)/M phases (By similarity).</text>
</comment>
<comment type="domain">
    <text>Composed of three domains: a modulating N-terminal domain, a DNA-binding domain and a C-terminal ligand-binding domain.</text>
</comment>
<comment type="PTM">
    <text evidence="1">Phosphorylated on multiple serine sites. Several of these sites are hormone-dependent. Phosphorylation on Ser-294 is highly hormone-dependent and modulates ubiquitination and sumoylation on Lys-388. Phosphorylation on Ser-345 also requires induction by hormone. Basal phosphorylation on Ser-81, Ser-162, Ser-190 and Ser-400 is increased in response to progesterone and can be phosphorylated in vitro by the CDK2-A1 complex. Increased levels of phosphorylation on Ser-400 also in the presence of EGF, heregulin, IGF, PMA and FBS. Phosphorylation at this site by CDK2 is ligand-independent, and increases nuclear translocation and transcriptional activity. Phosphorylation at Ser-162 and Ser-294, but not at Ser-190, is impaired during the G(2)/M phase of the cell cycle. Phosphorylation on Ser-345 by ERK1/2 MAPK is required for interaction with SP1 (By similarity).</text>
</comment>
<comment type="PTM">
    <text evidence="1">Sumoylation is hormone-dependent and represses transcriptional activity. Sumoylation on all three sites is enhanced by PIAS3. Desumoylated by SENP1. Sumoylation on Lys-388, the main site of sumoylation, is repressed by ubiquitination on the same site, and modulated by phosphorylation at Ser-294 (By similarity).</text>
</comment>
<comment type="PTM">
    <text evidence="1">Ubiquitination is hormone-dependent and represses sumoylation on the same site. Promoted by MAPK-mediated phosphorylation on Ser-294 (By similarity).</text>
</comment>
<comment type="PTM">
    <text evidence="1">Palmitoylated by ZDHHC7 and ZDHHC21. Palmitoylation is required for plasma membrane targeting and for rapid intracellular signaling via ERK and AKT kinases and cAMP generation (By similarity).</text>
</comment>
<comment type="similarity">
    <text evidence="8">Belongs to the nuclear hormone receptor family.</text>
</comment>
<name>PRGR_ATEPA</name>
<proteinExistence type="inferred from homology"/>